<proteinExistence type="inferred from homology"/>
<feature type="chain" id="PRO_0000120637" description="NAD kinase">
    <location>
        <begin position="1"/>
        <end position="259"/>
    </location>
</feature>
<feature type="active site" description="Proton acceptor" evidence="1">
    <location>
        <position position="43"/>
    </location>
</feature>
<feature type="binding site" evidence="1">
    <location>
        <begin position="43"/>
        <end position="44"/>
    </location>
    <ligand>
        <name>NAD(+)</name>
        <dbReference type="ChEBI" id="CHEBI:57540"/>
    </ligand>
</feature>
<feature type="binding site" evidence="1">
    <location>
        <begin position="111"/>
        <end position="112"/>
    </location>
    <ligand>
        <name>NAD(+)</name>
        <dbReference type="ChEBI" id="CHEBI:57540"/>
    </ligand>
</feature>
<feature type="binding site" evidence="1">
    <location>
        <position position="136"/>
    </location>
    <ligand>
        <name>NAD(+)</name>
        <dbReference type="ChEBI" id="CHEBI:57540"/>
    </ligand>
</feature>
<feature type="sequence conflict" description="In Ref. 2; AAD12334." evidence="2" ref="2">
    <original>ELNPLLHPNQ</original>
    <variation>RTKPLTYIPT</variation>
    <location>
        <begin position="171"/>
        <end position="180"/>
    </location>
</feature>
<organism>
    <name type="scientific">Mycoplasma genitalium (strain ATCC 33530 / DSM 19775 / NCTC 10195 / G37)</name>
    <name type="common">Mycoplasmoides genitalium</name>
    <dbReference type="NCBI Taxonomy" id="243273"/>
    <lineage>
        <taxon>Bacteria</taxon>
        <taxon>Bacillati</taxon>
        <taxon>Mycoplasmatota</taxon>
        <taxon>Mycoplasmoidales</taxon>
        <taxon>Mycoplasmoidaceae</taxon>
        <taxon>Mycoplasmoides</taxon>
    </lineage>
</organism>
<protein>
    <recommendedName>
        <fullName evidence="1">NAD kinase</fullName>
        <ecNumber evidence="1">2.7.1.23</ecNumber>
    </recommendedName>
    <alternativeName>
        <fullName evidence="1">ATP-dependent NAD kinase</fullName>
    </alternativeName>
</protein>
<comment type="function">
    <text evidence="1">Involved in the regulation of the intracellular balance of NAD and NADP, and is a key enzyme in the biosynthesis of NADP. Catalyzes specifically the phosphorylation on 2'-hydroxyl of the adenosine moiety of NAD to yield NADP.</text>
</comment>
<comment type="catalytic activity">
    <reaction evidence="1">
        <text>NAD(+) + ATP = ADP + NADP(+) + H(+)</text>
        <dbReference type="Rhea" id="RHEA:18629"/>
        <dbReference type="ChEBI" id="CHEBI:15378"/>
        <dbReference type="ChEBI" id="CHEBI:30616"/>
        <dbReference type="ChEBI" id="CHEBI:57540"/>
        <dbReference type="ChEBI" id="CHEBI:58349"/>
        <dbReference type="ChEBI" id="CHEBI:456216"/>
        <dbReference type="EC" id="2.7.1.23"/>
    </reaction>
</comment>
<comment type="cofactor">
    <cofactor evidence="1">
        <name>a divalent metal cation</name>
        <dbReference type="ChEBI" id="CHEBI:60240"/>
    </cofactor>
</comment>
<comment type="subcellular location">
    <subcellularLocation>
        <location evidence="1">Cytoplasm</location>
    </subcellularLocation>
</comment>
<comment type="similarity">
    <text evidence="1">Belongs to the NAD kinase family.</text>
</comment>
<keyword id="KW-0067">ATP-binding</keyword>
<keyword id="KW-0963">Cytoplasm</keyword>
<keyword id="KW-0418">Kinase</keyword>
<keyword id="KW-0520">NAD</keyword>
<keyword id="KW-0521">NADP</keyword>
<keyword id="KW-0547">Nucleotide-binding</keyword>
<keyword id="KW-1185">Reference proteome</keyword>
<keyword id="KW-0808">Transferase</keyword>
<sequence>MKYKIFASTTPQTEPVLNKLRAVLKTWQAVENGYEYVFVLGGDGFFVSTLANYNCDSCKVVGINTGHIGFYTSFNGDDLDENFISKLTSFEFKKINLLEVKTKNHSFLVLNELAVYTNTAYPINIFIDDNHWESYRGSGLLIGPRTGSTALAKSAKGAVIFPNVDVVQIIELNPLLHPNQITIQSPIILPMQTKVEFRIKKAFKAEQFPNFYADGIKLDLKNEDTSISFQLVLSRSMFHASLKTKDFIDKLKSTFIKQS</sequence>
<dbReference type="EC" id="2.7.1.23" evidence="1"/>
<dbReference type="EMBL" id="L43967">
    <property type="protein sequence ID" value="AAC71346.1"/>
    <property type="molecule type" value="Genomic_DNA"/>
</dbReference>
<dbReference type="EMBL" id="U01806">
    <property type="protein sequence ID" value="AAD12334.1"/>
    <property type="molecule type" value="Genomic_DNA"/>
</dbReference>
<dbReference type="PIR" id="B64214">
    <property type="entry name" value="B64214"/>
</dbReference>
<dbReference type="RefSeq" id="WP_009885682.1">
    <property type="nucleotide sequence ID" value="NC_000908.2"/>
</dbReference>
<dbReference type="SMR" id="P47374"/>
<dbReference type="FunCoup" id="P47374">
    <property type="interactions" value="185"/>
</dbReference>
<dbReference type="STRING" id="243273.MG_128"/>
<dbReference type="GeneID" id="88282252"/>
<dbReference type="KEGG" id="mge:MG_128"/>
<dbReference type="eggNOG" id="COG0061">
    <property type="taxonomic scope" value="Bacteria"/>
</dbReference>
<dbReference type="HOGENOM" id="CLU_008831_0_3_14"/>
<dbReference type="InParanoid" id="P47374"/>
<dbReference type="OrthoDB" id="9774737at2"/>
<dbReference type="BioCyc" id="MGEN243273:G1GJ2-141-MONOMER"/>
<dbReference type="Proteomes" id="UP000000807">
    <property type="component" value="Chromosome"/>
</dbReference>
<dbReference type="GO" id="GO:0005737">
    <property type="term" value="C:cytoplasm"/>
    <property type="evidence" value="ECO:0007669"/>
    <property type="project" value="UniProtKB-SubCell"/>
</dbReference>
<dbReference type="GO" id="GO:0005524">
    <property type="term" value="F:ATP binding"/>
    <property type="evidence" value="ECO:0007669"/>
    <property type="project" value="UniProtKB-KW"/>
</dbReference>
<dbReference type="GO" id="GO:0046872">
    <property type="term" value="F:metal ion binding"/>
    <property type="evidence" value="ECO:0007669"/>
    <property type="project" value="UniProtKB-UniRule"/>
</dbReference>
<dbReference type="GO" id="GO:0051287">
    <property type="term" value="F:NAD binding"/>
    <property type="evidence" value="ECO:0007669"/>
    <property type="project" value="UniProtKB-ARBA"/>
</dbReference>
<dbReference type="GO" id="GO:0003951">
    <property type="term" value="F:NAD+ kinase activity"/>
    <property type="evidence" value="ECO:0000318"/>
    <property type="project" value="GO_Central"/>
</dbReference>
<dbReference type="GO" id="GO:0019674">
    <property type="term" value="P:NAD metabolic process"/>
    <property type="evidence" value="ECO:0007669"/>
    <property type="project" value="InterPro"/>
</dbReference>
<dbReference type="GO" id="GO:0006741">
    <property type="term" value="P:NADP biosynthetic process"/>
    <property type="evidence" value="ECO:0000318"/>
    <property type="project" value="GO_Central"/>
</dbReference>
<dbReference type="Gene3D" id="3.40.50.10330">
    <property type="entry name" value="Probable inorganic polyphosphate/atp-NAD kinase, domain 1"/>
    <property type="match status" value="1"/>
</dbReference>
<dbReference type="Gene3D" id="2.60.200.30">
    <property type="entry name" value="Probable inorganic polyphosphate/atp-NAD kinase, domain 2"/>
    <property type="match status" value="1"/>
</dbReference>
<dbReference type="HAMAP" id="MF_00361">
    <property type="entry name" value="NAD_kinase"/>
    <property type="match status" value="1"/>
</dbReference>
<dbReference type="InterPro" id="IPR017438">
    <property type="entry name" value="ATP-NAD_kinase_N"/>
</dbReference>
<dbReference type="InterPro" id="IPR017437">
    <property type="entry name" value="ATP-NAD_kinase_PpnK-typ_C"/>
</dbReference>
<dbReference type="InterPro" id="IPR016064">
    <property type="entry name" value="NAD/diacylglycerol_kinase_sf"/>
</dbReference>
<dbReference type="InterPro" id="IPR002504">
    <property type="entry name" value="NADK"/>
</dbReference>
<dbReference type="NCBIfam" id="NF001838">
    <property type="entry name" value="PRK00561.1"/>
    <property type="match status" value="1"/>
</dbReference>
<dbReference type="PANTHER" id="PTHR20275">
    <property type="entry name" value="NAD KINASE"/>
    <property type="match status" value="1"/>
</dbReference>
<dbReference type="PANTHER" id="PTHR20275:SF0">
    <property type="entry name" value="NAD KINASE"/>
    <property type="match status" value="1"/>
</dbReference>
<dbReference type="Pfam" id="PF01513">
    <property type="entry name" value="NAD_kinase"/>
    <property type="match status" value="1"/>
</dbReference>
<dbReference type="Pfam" id="PF20143">
    <property type="entry name" value="NAD_kinase_C"/>
    <property type="match status" value="1"/>
</dbReference>
<dbReference type="SUPFAM" id="SSF111331">
    <property type="entry name" value="NAD kinase/diacylglycerol kinase-like"/>
    <property type="match status" value="1"/>
</dbReference>
<gene>
    <name evidence="1" type="primary">nadK</name>
    <name type="ordered locus">MG128</name>
</gene>
<name>NADK_MYCGE</name>
<reference key="1">
    <citation type="journal article" date="1995" name="Science">
        <title>The minimal gene complement of Mycoplasma genitalium.</title>
        <authorList>
            <person name="Fraser C.M."/>
            <person name="Gocayne J.D."/>
            <person name="White O."/>
            <person name="Adams M.D."/>
            <person name="Clayton R.A."/>
            <person name="Fleischmann R.D."/>
            <person name="Bult C.J."/>
            <person name="Kerlavage A.R."/>
            <person name="Sutton G.G."/>
            <person name="Kelley J.M."/>
            <person name="Fritchman J.L."/>
            <person name="Weidman J.F."/>
            <person name="Small K.V."/>
            <person name="Sandusky M."/>
            <person name="Fuhrmann J.L."/>
            <person name="Nguyen D.T."/>
            <person name="Utterback T.R."/>
            <person name="Saudek D.M."/>
            <person name="Phillips C.A."/>
            <person name="Merrick J.M."/>
            <person name="Tomb J.-F."/>
            <person name="Dougherty B.A."/>
            <person name="Bott K.F."/>
            <person name="Hu P.-C."/>
            <person name="Lucier T.S."/>
            <person name="Peterson S.N."/>
            <person name="Smith H.O."/>
            <person name="Hutchison C.A. III"/>
            <person name="Venter J.C."/>
        </authorList>
    </citation>
    <scope>NUCLEOTIDE SEQUENCE [LARGE SCALE GENOMIC DNA]</scope>
    <source>
        <strain>ATCC 33530 / DSM 19775 / NCTC 10195 / G37</strain>
    </source>
</reference>
<reference key="2">
    <citation type="journal article" date="1993" name="J. Bacteriol.">
        <title>A survey of the Mycoplasma genitalium genome by using random sequencing.</title>
        <authorList>
            <person name="Peterson S.N."/>
            <person name="Hu P.-C."/>
            <person name="Bott K.F."/>
            <person name="Hutchison C.A. III"/>
        </authorList>
    </citation>
    <scope>NUCLEOTIDE SEQUENCE [GENOMIC DNA] OF 121-180</scope>
    <source>
        <strain>ATCC 33530 / DSM 19775 / NCTC 10195 / G37</strain>
    </source>
</reference>
<evidence type="ECO:0000255" key="1">
    <source>
        <dbReference type="HAMAP-Rule" id="MF_00361"/>
    </source>
</evidence>
<evidence type="ECO:0000305" key="2"/>
<accession>P47374</accession>
<accession>Q49458</accession>